<protein>
    <recommendedName>
        <fullName evidence="1">Molybdenum cofactor sulfurase</fullName>
        <shortName evidence="1">MCS</shortName>
        <shortName evidence="1">MOS</shortName>
        <shortName evidence="1">MoCo sulfurase</shortName>
        <ecNumber evidence="1">2.8.1.9</ecNumber>
    </recommendedName>
    <alternativeName>
        <fullName evidence="1">Molybdenum cofactor sulfurtransferase</fullName>
    </alternativeName>
</protein>
<dbReference type="EC" id="2.8.1.9" evidence="1"/>
<dbReference type="EMBL" id="CP009805">
    <property type="protein sequence ID" value="ATZ45638.1"/>
    <property type="molecule type" value="Genomic_DNA"/>
</dbReference>
<dbReference type="RefSeq" id="XP_001545952.1">
    <property type="nucleotide sequence ID" value="XM_001545902.1"/>
</dbReference>
<dbReference type="SMR" id="A6SRX6"/>
<dbReference type="EnsemblFungi" id="Bcin01g03840.1">
    <property type="protein sequence ID" value="Bcin01p03840.1"/>
    <property type="gene ID" value="Bcin01g03840"/>
</dbReference>
<dbReference type="GeneID" id="5426407"/>
<dbReference type="KEGG" id="bfu:BCIN_01g03840"/>
<dbReference type="VEuPathDB" id="FungiDB:Bcin01g03840"/>
<dbReference type="OMA" id="PCTRCQM"/>
<dbReference type="OrthoDB" id="10264306at2759"/>
<dbReference type="Proteomes" id="UP000001798">
    <property type="component" value="Chromosome bcin01"/>
</dbReference>
<dbReference type="GO" id="GO:0016829">
    <property type="term" value="F:lyase activity"/>
    <property type="evidence" value="ECO:0007669"/>
    <property type="project" value="UniProtKB-UniRule"/>
</dbReference>
<dbReference type="GO" id="GO:0008265">
    <property type="term" value="F:molybdenum cofactor sulfurtransferase activity"/>
    <property type="evidence" value="ECO:0007669"/>
    <property type="project" value="UniProtKB-UniRule"/>
</dbReference>
<dbReference type="GO" id="GO:0030151">
    <property type="term" value="F:molybdenum ion binding"/>
    <property type="evidence" value="ECO:0007669"/>
    <property type="project" value="UniProtKB-UniRule"/>
</dbReference>
<dbReference type="GO" id="GO:0030170">
    <property type="term" value="F:pyridoxal phosphate binding"/>
    <property type="evidence" value="ECO:0007669"/>
    <property type="project" value="UniProtKB-UniRule"/>
</dbReference>
<dbReference type="GO" id="GO:0006777">
    <property type="term" value="P:Mo-molybdopterin cofactor biosynthetic process"/>
    <property type="evidence" value="ECO:0007669"/>
    <property type="project" value="UniProtKB-UniRule"/>
</dbReference>
<dbReference type="Gene3D" id="3.40.640.10">
    <property type="entry name" value="Type I PLP-dependent aspartate aminotransferase-like (Major domain)"/>
    <property type="match status" value="1"/>
</dbReference>
<dbReference type="HAMAP" id="MF_03050">
    <property type="entry name" value="MOCOS"/>
    <property type="match status" value="1"/>
</dbReference>
<dbReference type="InterPro" id="IPR000192">
    <property type="entry name" value="Aminotrans_V_dom"/>
</dbReference>
<dbReference type="InterPro" id="IPR005302">
    <property type="entry name" value="MoCF_Sase_C"/>
</dbReference>
<dbReference type="InterPro" id="IPR028886">
    <property type="entry name" value="MoCo_sulfurase"/>
</dbReference>
<dbReference type="InterPro" id="IPR005303">
    <property type="entry name" value="MOCOS_middle"/>
</dbReference>
<dbReference type="InterPro" id="IPR015424">
    <property type="entry name" value="PyrdxlP-dep_Trfase"/>
</dbReference>
<dbReference type="InterPro" id="IPR015421">
    <property type="entry name" value="PyrdxlP-dep_Trfase_major"/>
</dbReference>
<dbReference type="PANTHER" id="PTHR14237:SF19">
    <property type="entry name" value="MITOCHONDRIAL AMIDOXIME REDUCING COMPONENT 1"/>
    <property type="match status" value="1"/>
</dbReference>
<dbReference type="PANTHER" id="PTHR14237">
    <property type="entry name" value="MOLYBDOPTERIN COFACTOR SULFURASE MOSC"/>
    <property type="match status" value="1"/>
</dbReference>
<dbReference type="Pfam" id="PF00266">
    <property type="entry name" value="Aminotran_5"/>
    <property type="match status" value="1"/>
</dbReference>
<dbReference type="Pfam" id="PF03473">
    <property type="entry name" value="MOSC"/>
    <property type="match status" value="1"/>
</dbReference>
<dbReference type="Pfam" id="PF03476">
    <property type="entry name" value="MOSC_N"/>
    <property type="match status" value="1"/>
</dbReference>
<dbReference type="SUPFAM" id="SSF141673">
    <property type="entry name" value="MOSC N-terminal domain-like"/>
    <property type="match status" value="1"/>
</dbReference>
<dbReference type="SUPFAM" id="SSF53383">
    <property type="entry name" value="PLP-dependent transferases"/>
    <property type="match status" value="1"/>
</dbReference>
<dbReference type="PROSITE" id="PS51340">
    <property type="entry name" value="MOSC"/>
    <property type="match status" value="1"/>
</dbReference>
<gene>
    <name evidence="1" type="primary">hxB</name>
    <name type="ORF">BC1G_15280</name>
    <name type="ORF">BCIN_01g03840</name>
</gene>
<name>MOCOS_BOTFB</name>
<proteinExistence type="inferred from homology"/>
<accession>A6SRX6</accession>
<accession>A0A384J546</accession>
<organism>
    <name type="scientific">Botryotinia fuckeliana (strain B05.10)</name>
    <name type="common">Noble rot fungus</name>
    <name type="synonym">Botrytis cinerea</name>
    <dbReference type="NCBI Taxonomy" id="332648"/>
    <lineage>
        <taxon>Eukaryota</taxon>
        <taxon>Fungi</taxon>
        <taxon>Dikarya</taxon>
        <taxon>Ascomycota</taxon>
        <taxon>Pezizomycotina</taxon>
        <taxon>Leotiomycetes</taxon>
        <taxon>Helotiales</taxon>
        <taxon>Sclerotiniaceae</taxon>
        <taxon>Botrytis</taxon>
    </lineage>
</organism>
<keyword id="KW-0501">Molybdenum cofactor biosynthesis</keyword>
<keyword id="KW-0663">Pyridoxal phosphate</keyword>
<keyword id="KW-1185">Reference proteome</keyword>
<keyword id="KW-0808">Transferase</keyword>
<feature type="chain" id="PRO_0000369382" description="Molybdenum cofactor sulfurase">
    <location>
        <begin position="1"/>
        <end position="813"/>
    </location>
</feature>
<feature type="domain" description="MOSC" evidence="1">
    <location>
        <begin position="648"/>
        <end position="812"/>
    </location>
</feature>
<feature type="region of interest" description="Disordered" evidence="2">
    <location>
        <begin position="625"/>
        <end position="670"/>
    </location>
</feature>
<feature type="compositionally biased region" description="Basic residues" evidence="2">
    <location>
        <begin position="628"/>
        <end position="640"/>
    </location>
</feature>
<feature type="active site" evidence="1">
    <location>
        <position position="391"/>
    </location>
</feature>
<feature type="modified residue" description="N6-(pyridoxal phosphate)lysine" evidence="1">
    <location>
        <position position="228"/>
    </location>
</feature>
<sequence>MEEYNKAVEEFRKHEYPMLKDAVYLDHAGTTLYSKSLMERYMGDMMSNLYGNPHSASTSSQLSTSRIENTRLNVLQFFNADPEDFDVVFVANATAGIKLVMDAFRCQEDGFLYGYHQDSHTSLVGVREDAVSSRCLDDDAVECWLSGSEALVRNEHNSEIGLFAYPAQSNLDGRRLPLSWPERVRNLSYEAQANTYTLLDASALVSTSPLDLSDVSKAPDFTVLSFYKIFGFPDLGALIVRKDSGAILQTRKYFGGGTVEVVVCLKEQWHAPKGQSLHENLEDGTLPFHNIMALEAAIDVHKSLYGSMECIANHTTFLARKLYEGLKSLQHANSEPACIIYSPGFSETSSNVQGPTIAFNVKNSFGAWVTNVEFERLASIKNYHIRTGGLCNPGGVASALELQPWETRRNFSAGLRCGGETDIYAGKITGVIRVSLGAMSTMSDVDSFLSFVNEFFVDHTVVSADEDGESQKSVDMYVESLTIYPIKSCGGFEIPKETAWEVRPEGLAWDREWCLIHQGTGQALSQKRYPRMALIKPTIDFDLGLLKLRYQGSTFPTLVDEISVSLSSDPSSYKNPNNIHSLSSRVCGDAIAAQTYFDHEINDFFSKILEAPCVLARFPAGGSGPSLRHAKAHMQKHQGPKRSAAIEKSSAHSFHDPPTPPDSDSENRKRPILLSNESPILAINRSSINMLNEEIAKSGGKLASASVFRGNIVLASTELTDSHHPYSEDHWSTLQIGSETYQMLGSCRRCHMICVDQDTAEKNEEPFVTLAKTRRFESKVFFGSHMCHVPSFSRHKKHQFPVIKVGDKVSIGL</sequence>
<evidence type="ECO:0000255" key="1">
    <source>
        <dbReference type="HAMAP-Rule" id="MF_03050"/>
    </source>
</evidence>
<evidence type="ECO:0000256" key="2">
    <source>
        <dbReference type="SAM" id="MobiDB-lite"/>
    </source>
</evidence>
<reference key="1">
    <citation type="journal article" date="2011" name="PLoS Genet.">
        <title>Genomic analysis of the necrotrophic fungal pathogens Sclerotinia sclerotiorum and Botrytis cinerea.</title>
        <authorList>
            <person name="Amselem J."/>
            <person name="Cuomo C.A."/>
            <person name="van Kan J.A.L."/>
            <person name="Viaud M."/>
            <person name="Benito E.P."/>
            <person name="Couloux A."/>
            <person name="Coutinho P.M."/>
            <person name="de Vries R.P."/>
            <person name="Dyer P.S."/>
            <person name="Fillinger S."/>
            <person name="Fournier E."/>
            <person name="Gout L."/>
            <person name="Hahn M."/>
            <person name="Kohn L."/>
            <person name="Lapalu N."/>
            <person name="Plummer K.M."/>
            <person name="Pradier J.-M."/>
            <person name="Quevillon E."/>
            <person name="Sharon A."/>
            <person name="Simon A."/>
            <person name="ten Have A."/>
            <person name="Tudzynski B."/>
            <person name="Tudzynski P."/>
            <person name="Wincker P."/>
            <person name="Andrew M."/>
            <person name="Anthouard V."/>
            <person name="Beever R.E."/>
            <person name="Beffa R."/>
            <person name="Benoit I."/>
            <person name="Bouzid O."/>
            <person name="Brault B."/>
            <person name="Chen Z."/>
            <person name="Choquer M."/>
            <person name="Collemare J."/>
            <person name="Cotton P."/>
            <person name="Danchin E.G."/>
            <person name="Da Silva C."/>
            <person name="Gautier A."/>
            <person name="Giraud C."/>
            <person name="Giraud T."/>
            <person name="Gonzalez C."/>
            <person name="Grossetete S."/>
            <person name="Gueldener U."/>
            <person name="Henrissat B."/>
            <person name="Howlett B.J."/>
            <person name="Kodira C."/>
            <person name="Kretschmer M."/>
            <person name="Lappartient A."/>
            <person name="Leroch M."/>
            <person name="Levis C."/>
            <person name="Mauceli E."/>
            <person name="Neuveglise C."/>
            <person name="Oeser B."/>
            <person name="Pearson M."/>
            <person name="Poulain J."/>
            <person name="Poussereau N."/>
            <person name="Quesneville H."/>
            <person name="Rascle C."/>
            <person name="Schumacher J."/>
            <person name="Segurens B."/>
            <person name="Sexton A."/>
            <person name="Silva E."/>
            <person name="Sirven C."/>
            <person name="Soanes D.M."/>
            <person name="Talbot N.J."/>
            <person name="Templeton M."/>
            <person name="Yandava C."/>
            <person name="Yarden O."/>
            <person name="Zeng Q."/>
            <person name="Rollins J.A."/>
            <person name="Lebrun M.-H."/>
            <person name="Dickman M."/>
        </authorList>
    </citation>
    <scope>NUCLEOTIDE SEQUENCE [LARGE SCALE GENOMIC DNA]</scope>
    <source>
        <strain>B05.10</strain>
    </source>
</reference>
<reference key="2">
    <citation type="journal article" date="2012" name="Eukaryot. Cell">
        <title>Genome update of Botrytis cinerea strains B05.10 and T4.</title>
        <authorList>
            <person name="Staats M."/>
            <person name="van Kan J.A.L."/>
        </authorList>
    </citation>
    <scope>NUCLEOTIDE SEQUENCE [LARGE SCALE GENOMIC DNA]</scope>
    <scope>GENOME REANNOTATION</scope>
    <source>
        <strain>B05.10</strain>
    </source>
</reference>
<reference key="3">
    <citation type="journal article" date="2017" name="Mol. Plant Pathol.">
        <title>A gapless genome sequence of the fungus Botrytis cinerea.</title>
        <authorList>
            <person name="van Kan J.A.L."/>
            <person name="Stassen J.H.M."/>
            <person name="Mosbach A."/>
            <person name="van der Lee T.A.J."/>
            <person name="Faino L."/>
            <person name="Farmer A.D."/>
            <person name="Papasotiriou D.G."/>
            <person name="Zhou S."/>
            <person name="Seidl M.F."/>
            <person name="Cottam E."/>
            <person name="Edel D."/>
            <person name="Hahn M."/>
            <person name="Schwartz D.C."/>
            <person name="Dietrich R.A."/>
            <person name="Widdison S."/>
            <person name="Scalliet G."/>
        </authorList>
    </citation>
    <scope>NUCLEOTIDE SEQUENCE [LARGE SCALE GENOMIC DNA]</scope>
    <scope>GENOME REANNOTATION</scope>
    <source>
        <strain>B05.10</strain>
    </source>
</reference>
<comment type="function">
    <text evidence="1">Sulfurates the molybdenum cofactor. Sulfation of molybdenum is essential for xanthine dehydrogenase (XDH) and aldehyde oxidase (ADO) enzymes in which molybdenum cofactor is liganded by 1 oxygen and 1 sulfur atom in active form.</text>
</comment>
<comment type="catalytic activity">
    <reaction evidence="1">
        <text>Mo-molybdopterin + L-cysteine + AH2 = thio-Mo-molybdopterin + L-alanine + A + H2O</text>
        <dbReference type="Rhea" id="RHEA:42636"/>
        <dbReference type="ChEBI" id="CHEBI:13193"/>
        <dbReference type="ChEBI" id="CHEBI:15377"/>
        <dbReference type="ChEBI" id="CHEBI:17499"/>
        <dbReference type="ChEBI" id="CHEBI:35235"/>
        <dbReference type="ChEBI" id="CHEBI:57972"/>
        <dbReference type="ChEBI" id="CHEBI:71302"/>
        <dbReference type="ChEBI" id="CHEBI:82685"/>
        <dbReference type="EC" id="2.8.1.9"/>
    </reaction>
</comment>
<comment type="cofactor">
    <cofactor evidence="1">
        <name>pyridoxal 5'-phosphate</name>
        <dbReference type="ChEBI" id="CHEBI:597326"/>
    </cofactor>
</comment>
<comment type="similarity">
    <text evidence="1">Belongs to the class-V pyridoxal-phosphate-dependent aminotransferase family. MOCOS subfamily.</text>
</comment>